<proteinExistence type="inferred from homology"/>
<dbReference type="EC" id="3.5.99.6" evidence="1"/>
<dbReference type="EMBL" id="CP000931">
    <property type="protein sequence ID" value="ABZ75388.1"/>
    <property type="molecule type" value="Genomic_DNA"/>
</dbReference>
<dbReference type="RefSeq" id="WP_012275940.1">
    <property type="nucleotide sequence ID" value="NC_010334.1"/>
</dbReference>
<dbReference type="SMR" id="B0TTP5"/>
<dbReference type="STRING" id="458817.Shal_0813"/>
<dbReference type="KEGG" id="shl:Shal_0813"/>
<dbReference type="eggNOG" id="COG0363">
    <property type="taxonomic scope" value="Bacteria"/>
</dbReference>
<dbReference type="HOGENOM" id="CLU_049611_0_1_6"/>
<dbReference type="OrthoDB" id="9791139at2"/>
<dbReference type="UniPathway" id="UPA00629">
    <property type="reaction ID" value="UER00684"/>
</dbReference>
<dbReference type="Proteomes" id="UP000001317">
    <property type="component" value="Chromosome"/>
</dbReference>
<dbReference type="GO" id="GO:0005737">
    <property type="term" value="C:cytoplasm"/>
    <property type="evidence" value="ECO:0007669"/>
    <property type="project" value="TreeGrafter"/>
</dbReference>
<dbReference type="GO" id="GO:0004342">
    <property type="term" value="F:glucosamine-6-phosphate deaminase activity"/>
    <property type="evidence" value="ECO:0007669"/>
    <property type="project" value="UniProtKB-UniRule"/>
</dbReference>
<dbReference type="GO" id="GO:0042802">
    <property type="term" value="F:identical protein binding"/>
    <property type="evidence" value="ECO:0007669"/>
    <property type="project" value="TreeGrafter"/>
</dbReference>
<dbReference type="GO" id="GO:0005975">
    <property type="term" value="P:carbohydrate metabolic process"/>
    <property type="evidence" value="ECO:0007669"/>
    <property type="project" value="InterPro"/>
</dbReference>
<dbReference type="GO" id="GO:0006043">
    <property type="term" value="P:glucosamine catabolic process"/>
    <property type="evidence" value="ECO:0007669"/>
    <property type="project" value="TreeGrafter"/>
</dbReference>
<dbReference type="GO" id="GO:0006046">
    <property type="term" value="P:N-acetylglucosamine catabolic process"/>
    <property type="evidence" value="ECO:0007669"/>
    <property type="project" value="TreeGrafter"/>
</dbReference>
<dbReference type="GO" id="GO:0019262">
    <property type="term" value="P:N-acetylneuraminate catabolic process"/>
    <property type="evidence" value="ECO:0007669"/>
    <property type="project" value="UniProtKB-UniRule"/>
</dbReference>
<dbReference type="CDD" id="cd01399">
    <property type="entry name" value="GlcN6P_deaminase"/>
    <property type="match status" value="1"/>
</dbReference>
<dbReference type="FunFam" id="3.40.50.1360:FF:000003">
    <property type="entry name" value="Glucosamine-6-phosphate deaminase"/>
    <property type="match status" value="1"/>
</dbReference>
<dbReference type="Gene3D" id="3.40.50.1360">
    <property type="match status" value="1"/>
</dbReference>
<dbReference type="HAMAP" id="MF_01241">
    <property type="entry name" value="GlcN6P_deamin"/>
    <property type="match status" value="1"/>
</dbReference>
<dbReference type="InterPro" id="IPR006148">
    <property type="entry name" value="Glc/Gal-6P_isomerase"/>
</dbReference>
<dbReference type="InterPro" id="IPR004547">
    <property type="entry name" value="Glucosamine6P_isomerase"/>
</dbReference>
<dbReference type="InterPro" id="IPR018321">
    <property type="entry name" value="Glucosamine6P_isomerase_CS"/>
</dbReference>
<dbReference type="InterPro" id="IPR037171">
    <property type="entry name" value="NagB/RpiA_transferase-like"/>
</dbReference>
<dbReference type="NCBIfam" id="TIGR00502">
    <property type="entry name" value="nagB"/>
    <property type="match status" value="1"/>
</dbReference>
<dbReference type="NCBIfam" id="NF001684">
    <property type="entry name" value="PRK00443.1-4"/>
    <property type="match status" value="1"/>
</dbReference>
<dbReference type="PANTHER" id="PTHR11280">
    <property type="entry name" value="GLUCOSAMINE-6-PHOSPHATE ISOMERASE"/>
    <property type="match status" value="1"/>
</dbReference>
<dbReference type="PANTHER" id="PTHR11280:SF5">
    <property type="entry name" value="GLUCOSAMINE-6-PHOSPHATE ISOMERASE"/>
    <property type="match status" value="1"/>
</dbReference>
<dbReference type="Pfam" id="PF01182">
    <property type="entry name" value="Glucosamine_iso"/>
    <property type="match status" value="1"/>
</dbReference>
<dbReference type="SUPFAM" id="SSF100950">
    <property type="entry name" value="NagB/RpiA/CoA transferase-like"/>
    <property type="match status" value="1"/>
</dbReference>
<dbReference type="PROSITE" id="PS01161">
    <property type="entry name" value="GLC_GALNAC_ISOMERASE"/>
    <property type="match status" value="1"/>
</dbReference>
<gene>
    <name evidence="1" type="primary">nagB</name>
    <name type="ordered locus">Shal_0813</name>
</gene>
<sequence>MQIVILKDSASVAEYGANIFIKQLQKKADSVLGLATGSTPLSLYQGLIAANKDKQISFKAVTTFNLDEYLGLEGTHPQSYRYFMNEQLFDHIDIDKSKTFVPPGDAENPIAACQGYEDKIKSAGGIDIQLLGIGRNGHIGFNEPSSGLMSRTRVKTLTKATIDDNARFFKEGEYQPHLSITMGIGTILDAKKVVLLATGENKAEAILATVEGALTAACPASALQLHQDAVLVIDEAAASKLTDRDFYKHIEVENQKLMARLGL</sequence>
<organism>
    <name type="scientific">Shewanella halifaxensis (strain HAW-EB4)</name>
    <dbReference type="NCBI Taxonomy" id="458817"/>
    <lineage>
        <taxon>Bacteria</taxon>
        <taxon>Pseudomonadati</taxon>
        <taxon>Pseudomonadota</taxon>
        <taxon>Gammaproteobacteria</taxon>
        <taxon>Alteromonadales</taxon>
        <taxon>Shewanellaceae</taxon>
        <taxon>Shewanella</taxon>
    </lineage>
</organism>
<accession>B0TTP5</accession>
<comment type="function">
    <text evidence="1">Catalyzes the reversible isomerization-deamination of glucosamine 6-phosphate (GlcN6P) to form fructose 6-phosphate (Fru6P) and ammonium ion.</text>
</comment>
<comment type="catalytic activity">
    <reaction evidence="1">
        <text>alpha-D-glucosamine 6-phosphate + H2O = beta-D-fructose 6-phosphate + NH4(+)</text>
        <dbReference type="Rhea" id="RHEA:12172"/>
        <dbReference type="ChEBI" id="CHEBI:15377"/>
        <dbReference type="ChEBI" id="CHEBI:28938"/>
        <dbReference type="ChEBI" id="CHEBI:57634"/>
        <dbReference type="ChEBI" id="CHEBI:75989"/>
        <dbReference type="EC" id="3.5.99.6"/>
    </reaction>
</comment>
<comment type="pathway">
    <text evidence="1">Amino-sugar metabolism; N-acetylneuraminate degradation; D-fructose 6-phosphate from N-acetylneuraminate: step 5/5.</text>
</comment>
<comment type="subunit">
    <text evidence="1">Homohexamer.</text>
</comment>
<comment type="similarity">
    <text evidence="1">Belongs to the glucosamine/galactosamine-6-phosphate isomerase family. NagB subfamily.</text>
</comment>
<keyword id="KW-0119">Carbohydrate metabolism</keyword>
<keyword id="KW-0378">Hydrolase</keyword>
<feature type="chain" id="PRO_1000085754" description="Glucosamine-6-phosphate deaminase">
    <location>
        <begin position="1"/>
        <end position="263"/>
    </location>
</feature>
<feature type="active site" description="Proton acceptor; for enolization step" evidence="1">
    <location>
        <position position="67"/>
    </location>
</feature>
<feature type="active site" description="For ring-opening step" evidence="1">
    <location>
        <position position="136"/>
    </location>
</feature>
<feature type="active site" description="Proton acceptor; for ring-opening step" evidence="1">
    <location>
        <position position="138"/>
    </location>
</feature>
<feature type="active site" description="For ring-opening step" evidence="1">
    <location>
        <position position="143"/>
    </location>
</feature>
<protein>
    <recommendedName>
        <fullName evidence="1">Glucosamine-6-phosphate deaminase</fullName>
        <ecNumber evidence="1">3.5.99.6</ecNumber>
    </recommendedName>
    <alternativeName>
        <fullName evidence="1">GlcN6P deaminase</fullName>
        <shortName evidence="1">GNPDA</shortName>
    </alternativeName>
    <alternativeName>
        <fullName evidence="1">Glucosamine-6-phosphate isomerase</fullName>
    </alternativeName>
</protein>
<name>NAGB_SHEHH</name>
<reference key="1">
    <citation type="submission" date="2008-01" db="EMBL/GenBank/DDBJ databases">
        <title>Complete sequence of Shewanella halifaxensis HAW-EB4.</title>
        <authorList>
            <consortium name="US DOE Joint Genome Institute"/>
            <person name="Copeland A."/>
            <person name="Lucas S."/>
            <person name="Lapidus A."/>
            <person name="Glavina del Rio T."/>
            <person name="Dalin E."/>
            <person name="Tice H."/>
            <person name="Bruce D."/>
            <person name="Goodwin L."/>
            <person name="Pitluck S."/>
            <person name="Sims D."/>
            <person name="Brettin T."/>
            <person name="Detter J.C."/>
            <person name="Han C."/>
            <person name="Kuske C.R."/>
            <person name="Schmutz J."/>
            <person name="Larimer F."/>
            <person name="Land M."/>
            <person name="Hauser L."/>
            <person name="Kyrpides N."/>
            <person name="Kim E."/>
            <person name="Zhao J.-S."/>
            <person name="Richardson P."/>
        </authorList>
    </citation>
    <scope>NUCLEOTIDE SEQUENCE [LARGE SCALE GENOMIC DNA]</scope>
    <source>
        <strain>HAW-EB4</strain>
    </source>
</reference>
<evidence type="ECO:0000255" key="1">
    <source>
        <dbReference type="HAMAP-Rule" id="MF_01241"/>
    </source>
</evidence>